<accession>Q9SAY3</accession>
<accession>O64451</accession>
<sequence>MIAARAANLQVAMKALALAVLALAYAAATARAEQCGRQAGGARCPNRLCCSRWGWCGLTDDYCKGGCQSQCRVSRDGGDDDVAAVLLTAPGGGRAGVASVVTSDQFERMLPHRDDAACPARGFYAYRAFVAAAGAFPAFAATGDADTRKREVAAFLAQTSHATSGGPYSWGYCYKEVKGATSDFCVPNARWPCAPGKAYHARGPMQIAYNYNYGAAGEAIGADLLGNPELVATDPTVAFKTALWLWMTARSPSQPSPHAVVTGQWTPTPADSAAGRAPGYGLTTNILTGGLQCAGGNGGADRVAFYKRYCDVLGVGYGPNLDCFGQAPFDGGIMSASAAK</sequence>
<feature type="signal peptide" evidence="1">
    <location>
        <begin position="1"/>
        <end position="32"/>
    </location>
</feature>
<feature type="chain" id="PRO_0000383467" description="Chitinase 7">
    <location>
        <begin position="33"/>
        <end position="340"/>
    </location>
</feature>
<feature type="domain" description="Chitin-binding type-1" evidence="2">
    <location>
        <begin position="33"/>
        <end position="73"/>
    </location>
</feature>
<feature type="disulfide bond" evidence="2">
    <location>
        <begin position="35"/>
        <end position="50"/>
    </location>
</feature>
<feature type="disulfide bond" evidence="2">
    <location>
        <begin position="44"/>
        <end position="56"/>
    </location>
</feature>
<feature type="disulfide bond" evidence="2">
    <location>
        <begin position="49"/>
        <end position="63"/>
    </location>
</feature>
<feature type="disulfide bond" evidence="2">
    <location>
        <begin position="67"/>
        <end position="71"/>
    </location>
</feature>
<feature type="disulfide bond" evidence="2">
    <location>
        <begin position="118"/>
        <end position="173"/>
    </location>
</feature>
<feature type="disulfide bond" evidence="2">
    <location>
        <begin position="185"/>
        <end position="193"/>
    </location>
</feature>
<feature type="disulfide bond" evidence="2">
    <location>
        <begin position="293"/>
        <end position="323"/>
    </location>
</feature>
<comment type="function">
    <text evidence="3">Hydrolyzes chitin and may play a role in defense against fungal pathogens containing chitin.</text>
</comment>
<comment type="catalytic activity">
    <reaction evidence="3">
        <text>Random endo-hydrolysis of N-acetyl-beta-D-glucosaminide (1-&gt;4)-beta-linkages in chitin and chitodextrins.</text>
        <dbReference type="EC" id="3.2.1.14"/>
    </reaction>
</comment>
<comment type="tissue specificity">
    <text evidence="3">Expressed in pistils, stamens and lodicules.</text>
</comment>
<comment type="similarity">
    <text evidence="4">Belongs to the glycosyl hydrolase 19 family. Chitinase class I subfamily.</text>
</comment>
<comment type="caution">
    <text evidence="3 4">Enzyme activity is uncertain. Was shown to have endochitinase activity (in vitro) (PubMed:10890535). Lacks the conserved Glu residue that is essential for catalytic activity, suggesting it lacks enzyme activity.</text>
</comment>
<comment type="sequence caution" evidence="4">
    <conflict type="erroneous initiation">
        <sequence resource="EMBL-CDS" id="BAA25638"/>
    </conflict>
</comment>
<protein>
    <recommendedName>
        <fullName>Chitinase 7</fullName>
        <ecNumber evidence="3">3.2.1.14</ecNumber>
    </recommendedName>
    <alternativeName>
        <fullName>Class I chitinase d</fullName>
        <shortName>OsChia1d</shortName>
    </alternativeName>
    <alternativeName>
        <fullName>Pathogenesis related (PR)-3 chitinase 7</fullName>
    </alternativeName>
</protein>
<keyword id="KW-0119">Carbohydrate metabolism</keyword>
<keyword id="KW-0146">Chitin degradation</keyword>
<keyword id="KW-0147">Chitin-binding</keyword>
<keyword id="KW-1015">Disulfide bond</keyword>
<keyword id="KW-0326">Glycosidase</keyword>
<keyword id="KW-0378">Hydrolase</keyword>
<keyword id="KW-0611">Plant defense</keyword>
<keyword id="KW-0624">Polysaccharide degradation</keyword>
<keyword id="KW-1185">Reference proteome</keyword>
<keyword id="KW-0732">Signal</keyword>
<evidence type="ECO:0000255" key="1"/>
<evidence type="ECO:0000255" key="2">
    <source>
        <dbReference type="PROSITE-ProRule" id="PRU00261"/>
    </source>
</evidence>
<evidence type="ECO:0000269" key="3">
    <source>
    </source>
</evidence>
<evidence type="ECO:0000305" key="4"/>
<reference key="1">
    <citation type="journal article" date="2000" name="Plant Mol. Biol.">
        <title>Flower-predominant expression of a gene encoding a novel class I chitinase in rice (Oryza sativa L.).</title>
        <authorList>
            <person name="Takakura Y."/>
            <person name="Ito T."/>
            <person name="Saito H."/>
            <person name="Inoue T."/>
            <person name="Komari T."/>
            <person name="Kuwata S."/>
        </authorList>
    </citation>
    <scope>NUCLEOTIDE SEQUENCE [MRNA]</scope>
    <scope>FUNCTION</scope>
    <scope>CATALYTIC ACTIVITY</scope>
    <scope>TISSUE SPECIFICITY</scope>
    <source>
        <strain>cv. IR24</strain>
        <strain>cv. IR36</strain>
        <tissue>Pistil</tissue>
    </source>
</reference>
<reference key="2">
    <citation type="journal article" date="2005" name="PLoS Biol.">
        <title>The genomes of Oryza sativa: a history of duplications.</title>
        <authorList>
            <person name="Yu J."/>
            <person name="Wang J."/>
            <person name="Lin W."/>
            <person name="Li S."/>
            <person name="Li H."/>
            <person name="Zhou J."/>
            <person name="Ni P."/>
            <person name="Dong W."/>
            <person name="Hu S."/>
            <person name="Zeng C."/>
            <person name="Zhang J."/>
            <person name="Zhang Y."/>
            <person name="Li R."/>
            <person name="Xu Z."/>
            <person name="Li S."/>
            <person name="Li X."/>
            <person name="Zheng H."/>
            <person name="Cong L."/>
            <person name="Lin L."/>
            <person name="Yin J."/>
            <person name="Geng J."/>
            <person name="Li G."/>
            <person name="Shi J."/>
            <person name="Liu J."/>
            <person name="Lv H."/>
            <person name="Li J."/>
            <person name="Wang J."/>
            <person name="Deng Y."/>
            <person name="Ran L."/>
            <person name="Shi X."/>
            <person name="Wang X."/>
            <person name="Wu Q."/>
            <person name="Li C."/>
            <person name="Ren X."/>
            <person name="Wang J."/>
            <person name="Wang X."/>
            <person name="Li D."/>
            <person name="Liu D."/>
            <person name="Zhang X."/>
            <person name="Ji Z."/>
            <person name="Zhao W."/>
            <person name="Sun Y."/>
            <person name="Zhang Z."/>
            <person name="Bao J."/>
            <person name="Han Y."/>
            <person name="Dong L."/>
            <person name="Ji J."/>
            <person name="Chen P."/>
            <person name="Wu S."/>
            <person name="Liu J."/>
            <person name="Xiao Y."/>
            <person name="Bu D."/>
            <person name="Tan J."/>
            <person name="Yang L."/>
            <person name="Ye C."/>
            <person name="Zhang J."/>
            <person name="Xu J."/>
            <person name="Zhou Y."/>
            <person name="Yu Y."/>
            <person name="Zhang B."/>
            <person name="Zhuang S."/>
            <person name="Wei H."/>
            <person name="Liu B."/>
            <person name="Lei M."/>
            <person name="Yu H."/>
            <person name="Li Y."/>
            <person name="Xu H."/>
            <person name="Wei S."/>
            <person name="He X."/>
            <person name="Fang L."/>
            <person name="Zhang Z."/>
            <person name="Zhang Y."/>
            <person name="Huang X."/>
            <person name="Su Z."/>
            <person name="Tong W."/>
            <person name="Li J."/>
            <person name="Tong Z."/>
            <person name="Li S."/>
            <person name="Ye J."/>
            <person name="Wang L."/>
            <person name="Fang L."/>
            <person name="Lei T."/>
            <person name="Chen C.-S."/>
            <person name="Chen H.-C."/>
            <person name="Xu Z."/>
            <person name="Li H."/>
            <person name="Huang H."/>
            <person name="Zhang F."/>
            <person name="Xu H."/>
            <person name="Li N."/>
            <person name="Zhao C."/>
            <person name="Li S."/>
            <person name="Dong L."/>
            <person name="Huang Y."/>
            <person name="Li L."/>
            <person name="Xi Y."/>
            <person name="Qi Q."/>
            <person name="Li W."/>
            <person name="Zhang B."/>
            <person name="Hu W."/>
            <person name="Zhang Y."/>
            <person name="Tian X."/>
            <person name="Jiao Y."/>
            <person name="Liang X."/>
            <person name="Jin J."/>
            <person name="Gao L."/>
            <person name="Zheng W."/>
            <person name="Hao B."/>
            <person name="Liu S.-M."/>
            <person name="Wang W."/>
            <person name="Yuan L."/>
            <person name="Cao M."/>
            <person name="McDermott J."/>
            <person name="Samudrala R."/>
            <person name="Wang J."/>
            <person name="Wong G.K.-S."/>
            <person name="Yang H."/>
        </authorList>
    </citation>
    <scope>NUCLEOTIDE SEQUENCE [LARGE SCALE GENOMIC DNA]</scope>
    <source>
        <strain>cv. 93-11</strain>
    </source>
</reference>
<reference key="3">
    <citation type="journal article" date="2006" name="Genome">
        <title>Distribution, structure, organ-specific expression, and phylogenic analysis of the pathogenesis-related protein-3 chitinase gene family in rice (Oryza sativa L.).</title>
        <authorList>
            <person name="Nakazaki T."/>
            <person name="Tsukiyama T."/>
            <person name="Okumoto Y."/>
            <person name="Kageyama D."/>
            <person name="Naito K."/>
            <person name="Inouye K."/>
            <person name="Tanisaka T."/>
        </authorList>
    </citation>
    <scope>GENE FAMILY</scope>
    <scope>NOMENCLATURE</scope>
</reference>
<dbReference type="EC" id="3.2.1.14" evidence="3"/>
<dbReference type="EMBL" id="AB012855">
    <property type="protein sequence ID" value="BAA25638.1"/>
    <property type="status" value="ALT_INIT"/>
    <property type="molecule type" value="mRNA"/>
</dbReference>
<dbReference type="EMBL" id="AB018248">
    <property type="protein sequence ID" value="BAA33762.1"/>
    <property type="molecule type" value="mRNA"/>
</dbReference>
<dbReference type="EMBL" id="CM000130">
    <property type="protein sequence ID" value="EAY97967.1"/>
    <property type="molecule type" value="Genomic_DNA"/>
</dbReference>
<dbReference type="SMR" id="Q9SAY3"/>
<dbReference type="STRING" id="39946.Q9SAY3"/>
<dbReference type="CAZy" id="CBM18">
    <property type="family name" value="Carbohydrate-Binding Module Family 18"/>
</dbReference>
<dbReference type="CAZy" id="GH19">
    <property type="family name" value="Glycoside Hydrolase Family 19"/>
</dbReference>
<dbReference type="EnsemblPlants" id="BGIOSGA019834-TA">
    <property type="protein sequence ID" value="BGIOSGA019834-PA"/>
    <property type="gene ID" value="BGIOSGA019834"/>
</dbReference>
<dbReference type="EnsemblPlants" id="OsGoSa_05g0016260.01">
    <property type="protein sequence ID" value="OsGoSa_05g0016260.01"/>
    <property type="gene ID" value="OsGoSa_05g0016260"/>
</dbReference>
<dbReference type="EnsemblPlants" id="OsIR64_05g0015930.01">
    <property type="protein sequence ID" value="OsIR64_05g0015930.01"/>
    <property type="gene ID" value="OsIR64_05g0015930"/>
</dbReference>
<dbReference type="EnsemblPlants" id="OsKYG_05g0016180.01">
    <property type="protein sequence ID" value="OsKYG_05g0016180.01"/>
    <property type="gene ID" value="OsKYG_05g0016180"/>
</dbReference>
<dbReference type="EnsemblPlants" id="OsLima_05g0016220.01">
    <property type="protein sequence ID" value="OsLima_05g0016220.01"/>
    <property type="gene ID" value="OsLima_05g0016220"/>
</dbReference>
<dbReference type="EnsemblPlants" id="OsMH63_05G016260_01">
    <property type="protein sequence ID" value="OsMH63_05G016260_01"/>
    <property type="gene ID" value="OsMH63_05G016260"/>
</dbReference>
<dbReference type="EnsemblPlants" id="OsZS97_05G016480_01">
    <property type="protein sequence ID" value="OsZS97_05G016480_01"/>
    <property type="gene ID" value="OsZS97_05G016480"/>
</dbReference>
<dbReference type="Gramene" id="BGIOSGA019834-TA">
    <property type="protein sequence ID" value="BGIOSGA019834-PA"/>
    <property type="gene ID" value="BGIOSGA019834"/>
</dbReference>
<dbReference type="Gramene" id="OsGoSa_05g0016260.01">
    <property type="protein sequence ID" value="OsGoSa_05g0016260.01"/>
    <property type="gene ID" value="OsGoSa_05g0016260"/>
</dbReference>
<dbReference type="Gramene" id="OsIR64_05g0015930.01">
    <property type="protein sequence ID" value="OsIR64_05g0015930.01"/>
    <property type="gene ID" value="OsIR64_05g0015930"/>
</dbReference>
<dbReference type="Gramene" id="OsKYG_05g0016180.01">
    <property type="protein sequence ID" value="OsKYG_05g0016180.01"/>
    <property type="gene ID" value="OsKYG_05g0016180"/>
</dbReference>
<dbReference type="Gramene" id="OsLima_05g0016220.01">
    <property type="protein sequence ID" value="OsLima_05g0016220.01"/>
    <property type="gene ID" value="OsLima_05g0016220"/>
</dbReference>
<dbReference type="Gramene" id="OsMH63_05G016260_01">
    <property type="protein sequence ID" value="OsMH63_05G016260_01"/>
    <property type="gene ID" value="OsMH63_05G016260"/>
</dbReference>
<dbReference type="Gramene" id="OsZS97_05G016480_01">
    <property type="protein sequence ID" value="OsZS97_05G016480_01"/>
    <property type="gene ID" value="OsZS97_05G016480"/>
</dbReference>
<dbReference type="HOGENOM" id="CLU_045506_1_0_1"/>
<dbReference type="OMA" id="CRGANND"/>
<dbReference type="OrthoDB" id="649016at2759"/>
<dbReference type="Proteomes" id="UP000007015">
    <property type="component" value="Chromosome 5"/>
</dbReference>
<dbReference type="GO" id="GO:0008061">
    <property type="term" value="F:chitin binding"/>
    <property type="evidence" value="ECO:0007669"/>
    <property type="project" value="UniProtKB-KW"/>
</dbReference>
<dbReference type="GO" id="GO:0008843">
    <property type="term" value="F:endochitinase activity"/>
    <property type="evidence" value="ECO:0007669"/>
    <property type="project" value="UniProtKB-EC"/>
</dbReference>
<dbReference type="GO" id="GO:0016998">
    <property type="term" value="P:cell wall macromolecule catabolic process"/>
    <property type="evidence" value="ECO:0007669"/>
    <property type="project" value="InterPro"/>
</dbReference>
<dbReference type="GO" id="GO:0006032">
    <property type="term" value="P:chitin catabolic process"/>
    <property type="evidence" value="ECO:0007669"/>
    <property type="project" value="UniProtKB-KW"/>
</dbReference>
<dbReference type="GO" id="GO:0050832">
    <property type="term" value="P:defense response to fungus"/>
    <property type="evidence" value="ECO:0007669"/>
    <property type="project" value="TreeGrafter"/>
</dbReference>
<dbReference type="GO" id="GO:0000272">
    <property type="term" value="P:polysaccharide catabolic process"/>
    <property type="evidence" value="ECO:0007669"/>
    <property type="project" value="UniProtKB-KW"/>
</dbReference>
<dbReference type="CDD" id="cd00325">
    <property type="entry name" value="chitinase_GH19"/>
    <property type="match status" value="1"/>
</dbReference>
<dbReference type="CDD" id="cd06921">
    <property type="entry name" value="ChtBD1_GH19_hevein"/>
    <property type="match status" value="1"/>
</dbReference>
<dbReference type="FunFam" id="3.30.60.10:FF:000001">
    <property type="entry name" value="Basic endochitinase"/>
    <property type="match status" value="1"/>
</dbReference>
<dbReference type="FunFam" id="3.30.20.10:FF:000001">
    <property type="entry name" value="Endochitinase (Chitinase)"/>
    <property type="match status" value="1"/>
</dbReference>
<dbReference type="Gene3D" id="1.10.530.10">
    <property type="match status" value="1"/>
</dbReference>
<dbReference type="Gene3D" id="3.30.20.10">
    <property type="entry name" value="Endochitinase, domain 2"/>
    <property type="match status" value="1"/>
</dbReference>
<dbReference type="Gene3D" id="3.30.60.10">
    <property type="entry name" value="Endochitinase-like"/>
    <property type="match status" value="1"/>
</dbReference>
<dbReference type="InterPro" id="IPR001002">
    <property type="entry name" value="Chitin-bd_1"/>
</dbReference>
<dbReference type="InterPro" id="IPR018371">
    <property type="entry name" value="Chitin-binding_1_CS"/>
</dbReference>
<dbReference type="InterPro" id="IPR036861">
    <property type="entry name" value="Endochitinase-like_sf"/>
</dbReference>
<dbReference type="InterPro" id="IPR016283">
    <property type="entry name" value="Glyco_hydro_19"/>
</dbReference>
<dbReference type="InterPro" id="IPR000726">
    <property type="entry name" value="Glyco_hydro_19_cat"/>
</dbReference>
<dbReference type="InterPro" id="IPR023346">
    <property type="entry name" value="Lysozyme-like_dom_sf"/>
</dbReference>
<dbReference type="PANTHER" id="PTHR22595:SF79">
    <property type="entry name" value="CHITINASE 12"/>
    <property type="match status" value="1"/>
</dbReference>
<dbReference type="PANTHER" id="PTHR22595">
    <property type="entry name" value="CHITINASE-RELATED"/>
    <property type="match status" value="1"/>
</dbReference>
<dbReference type="Pfam" id="PF00187">
    <property type="entry name" value="Chitin_bind_1"/>
    <property type="match status" value="1"/>
</dbReference>
<dbReference type="Pfam" id="PF00182">
    <property type="entry name" value="Glyco_hydro_19"/>
    <property type="match status" value="1"/>
</dbReference>
<dbReference type="PIRSF" id="PIRSF001060">
    <property type="entry name" value="Endochitinase"/>
    <property type="match status" value="1"/>
</dbReference>
<dbReference type="PRINTS" id="PR00451">
    <property type="entry name" value="CHITINBINDNG"/>
</dbReference>
<dbReference type="SMART" id="SM00270">
    <property type="entry name" value="ChtBD1"/>
    <property type="match status" value="1"/>
</dbReference>
<dbReference type="SUPFAM" id="SSF53955">
    <property type="entry name" value="Lysozyme-like"/>
    <property type="match status" value="1"/>
</dbReference>
<dbReference type="SUPFAM" id="SSF57016">
    <property type="entry name" value="Plant lectins/antimicrobial peptides"/>
    <property type="match status" value="1"/>
</dbReference>
<dbReference type="PROSITE" id="PS00026">
    <property type="entry name" value="CHIT_BIND_I_1"/>
    <property type="match status" value="1"/>
</dbReference>
<dbReference type="PROSITE" id="PS50941">
    <property type="entry name" value="CHIT_BIND_I_2"/>
    <property type="match status" value="1"/>
</dbReference>
<organism>
    <name type="scientific">Oryza sativa subsp. indica</name>
    <name type="common">Rice</name>
    <dbReference type="NCBI Taxonomy" id="39946"/>
    <lineage>
        <taxon>Eukaryota</taxon>
        <taxon>Viridiplantae</taxon>
        <taxon>Streptophyta</taxon>
        <taxon>Embryophyta</taxon>
        <taxon>Tracheophyta</taxon>
        <taxon>Spermatophyta</taxon>
        <taxon>Magnoliopsida</taxon>
        <taxon>Liliopsida</taxon>
        <taxon>Poales</taxon>
        <taxon>Poaceae</taxon>
        <taxon>BOP clade</taxon>
        <taxon>Oryzoideae</taxon>
        <taxon>Oryzeae</taxon>
        <taxon>Oryzinae</taxon>
        <taxon>Oryza</taxon>
        <taxon>Oryza sativa</taxon>
    </lineage>
</organism>
<proteinExistence type="evidence at protein level"/>
<name>CHI7_ORYSI</name>
<gene>
    <name type="primary">Cht7</name>
    <name type="synonym">PC</name>
    <name type="ORF">OsI_19885</name>
</gene>